<keyword id="KW-0067">ATP-binding</keyword>
<keyword id="KW-0460">Magnesium</keyword>
<keyword id="KW-0479">Metal-binding</keyword>
<keyword id="KW-0547">Nucleotide-binding</keyword>
<keyword id="KW-0548">Nucleotidyltransferase</keyword>
<keyword id="KW-0692">RNA repair</keyword>
<keyword id="KW-0694">RNA-binding</keyword>
<keyword id="KW-0808">Transferase</keyword>
<keyword id="KW-0819">tRNA processing</keyword>
<comment type="function">
    <text evidence="1">Catalyzes the addition and repair of the essential 3'-terminal CCA sequence in tRNAs without using a nucleic acid template. Adds these three nucleotides in the order of C, C, and A to the tRNA nucleotide-73, using CTP and ATP as substrates and producing inorganic pyrophosphate. tRNA 3'-terminal CCA addition is required both for tRNA processing and repair. Also involved in tRNA surveillance by mediating tandem CCA addition to generate a CCACCA at the 3' terminus of unstable tRNAs. While stable tRNAs receive only 3'-terminal CCA, unstable tRNAs are marked with CCACCA and rapidly degraded.</text>
</comment>
<comment type="catalytic activity">
    <reaction evidence="1">
        <text>a tRNA precursor + 2 CTP + ATP = a tRNA with a 3' CCA end + 3 diphosphate</text>
        <dbReference type="Rhea" id="RHEA:14433"/>
        <dbReference type="Rhea" id="RHEA-COMP:10465"/>
        <dbReference type="Rhea" id="RHEA-COMP:10468"/>
        <dbReference type="ChEBI" id="CHEBI:30616"/>
        <dbReference type="ChEBI" id="CHEBI:33019"/>
        <dbReference type="ChEBI" id="CHEBI:37563"/>
        <dbReference type="ChEBI" id="CHEBI:74896"/>
        <dbReference type="ChEBI" id="CHEBI:83071"/>
        <dbReference type="EC" id="2.7.7.72"/>
    </reaction>
</comment>
<comment type="catalytic activity">
    <reaction evidence="1">
        <text>a tRNA with a 3' CCA end + 2 CTP + ATP = a tRNA with a 3' CCACCA end + 3 diphosphate</text>
        <dbReference type="Rhea" id="RHEA:76235"/>
        <dbReference type="Rhea" id="RHEA-COMP:10468"/>
        <dbReference type="Rhea" id="RHEA-COMP:18655"/>
        <dbReference type="ChEBI" id="CHEBI:30616"/>
        <dbReference type="ChEBI" id="CHEBI:33019"/>
        <dbReference type="ChEBI" id="CHEBI:37563"/>
        <dbReference type="ChEBI" id="CHEBI:83071"/>
        <dbReference type="ChEBI" id="CHEBI:195187"/>
    </reaction>
    <physiologicalReaction direction="left-to-right" evidence="1">
        <dbReference type="Rhea" id="RHEA:76236"/>
    </physiologicalReaction>
</comment>
<comment type="cofactor">
    <cofactor evidence="1">
        <name>Mg(2+)</name>
        <dbReference type="ChEBI" id="CHEBI:18420"/>
    </cofactor>
</comment>
<comment type="subunit">
    <text evidence="1">Homodimer.</text>
</comment>
<comment type="miscellaneous">
    <text evidence="1">A single active site specifically recognizes both ATP and CTP and is responsible for their addition.</text>
</comment>
<comment type="similarity">
    <text evidence="1">Belongs to the tRNA nucleotidyltransferase/poly(A) polymerase family. Bacterial CCA-adding enzyme type 3 subfamily.</text>
</comment>
<accession>C3L8Q3</accession>
<feature type="chain" id="PRO_1000165130" description="CCA-adding enzyme">
    <location>
        <begin position="1"/>
        <end position="397"/>
    </location>
</feature>
<feature type="binding site" evidence="1">
    <location>
        <position position="26"/>
    </location>
    <ligand>
        <name>ATP</name>
        <dbReference type="ChEBI" id="CHEBI:30616"/>
    </ligand>
</feature>
<feature type="binding site" evidence="1">
    <location>
        <position position="26"/>
    </location>
    <ligand>
        <name>CTP</name>
        <dbReference type="ChEBI" id="CHEBI:37563"/>
    </ligand>
</feature>
<feature type="binding site" evidence="1">
    <location>
        <position position="29"/>
    </location>
    <ligand>
        <name>ATP</name>
        <dbReference type="ChEBI" id="CHEBI:30616"/>
    </ligand>
</feature>
<feature type="binding site" evidence="1">
    <location>
        <position position="29"/>
    </location>
    <ligand>
        <name>CTP</name>
        <dbReference type="ChEBI" id="CHEBI:37563"/>
    </ligand>
</feature>
<feature type="binding site" evidence="1">
    <location>
        <position position="39"/>
    </location>
    <ligand>
        <name>Mg(2+)</name>
        <dbReference type="ChEBI" id="CHEBI:18420"/>
    </ligand>
</feature>
<feature type="binding site" evidence="1">
    <location>
        <position position="41"/>
    </location>
    <ligand>
        <name>Mg(2+)</name>
        <dbReference type="ChEBI" id="CHEBI:18420"/>
    </ligand>
</feature>
<feature type="binding site" evidence="1">
    <location>
        <position position="110"/>
    </location>
    <ligand>
        <name>ATP</name>
        <dbReference type="ChEBI" id="CHEBI:30616"/>
    </ligand>
</feature>
<feature type="binding site" evidence="1">
    <location>
        <position position="110"/>
    </location>
    <ligand>
        <name>CTP</name>
        <dbReference type="ChEBI" id="CHEBI:37563"/>
    </ligand>
</feature>
<feature type="binding site" evidence="1">
    <location>
        <position position="153"/>
    </location>
    <ligand>
        <name>ATP</name>
        <dbReference type="ChEBI" id="CHEBI:30616"/>
    </ligand>
</feature>
<feature type="binding site" evidence="1">
    <location>
        <position position="153"/>
    </location>
    <ligand>
        <name>CTP</name>
        <dbReference type="ChEBI" id="CHEBI:37563"/>
    </ligand>
</feature>
<feature type="binding site" evidence="1">
    <location>
        <position position="156"/>
    </location>
    <ligand>
        <name>ATP</name>
        <dbReference type="ChEBI" id="CHEBI:30616"/>
    </ligand>
</feature>
<feature type="binding site" evidence="1">
    <location>
        <position position="156"/>
    </location>
    <ligand>
        <name>CTP</name>
        <dbReference type="ChEBI" id="CHEBI:37563"/>
    </ligand>
</feature>
<feature type="binding site" evidence="1">
    <location>
        <position position="159"/>
    </location>
    <ligand>
        <name>ATP</name>
        <dbReference type="ChEBI" id="CHEBI:30616"/>
    </ligand>
</feature>
<feature type="binding site" evidence="1">
    <location>
        <position position="159"/>
    </location>
    <ligand>
        <name>CTP</name>
        <dbReference type="ChEBI" id="CHEBI:37563"/>
    </ligand>
</feature>
<feature type="binding site" evidence="1">
    <location>
        <position position="162"/>
    </location>
    <ligand>
        <name>ATP</name>
        <dbReference type="ChEBI" id="CHEBI:30616"/>
    </ligand>
</feature>
<feature type="binding site" evidence="1">
    <location>
        <position position="162"/>
    </location>
    <ligand>
        <name>CTP</name>
        <dbReference type="ChEBI" id="CHEBI:37563"/>
    </ligand>
</feature>
<evidence type="ECO:0000255" key="1">
    <source>
        <dbReference type="HAMAP-Rule" id="MF_01263"/>
    </source>
</evidence>
<sequence>MERFKKASSIIETLKQQGHEAYFVGGSVRDLIIDRPIGDIDIATSALPEEVMAIFPRHVPVGLEHGTVIVVENGEPYEVTTFRTESEYEDFRRPSSVQFVRSLEEDLKRRDFTMNAIAMTEEGEMVDLFAGQEAIQKREIVTVGNAADRFQEDALRMMRGIRFVSTLGFSLETKTKQAIETYGHLLEHIAIERITVEFEKLLTGTYCVKGLKELVETKLFSHLPYLQMSEERLLKATQYNWDSFETDIEAWAFFLYCIGEEHPSVFLRQWKFSNKKIKDIVAVLLTIRKRKEKDWDTVLLYKTGIHIAEMAERVYEAMIESYDHTSVERVQTLFQALPIKSRQEMDVTGNDLLNWASKKPGPWVAEMIQKIEEAIVQGNVVNEKECIREWLQECNLL</sequence>
<dbReference type="EC" id="2.7.7.72" evidence="1"/>
<dbReference type="EMBL" id="CP001215">
    <property type="protein sequence ID" value="ACP16878.1"/>
    <property type="molecule type" value="Genomic_DNA"/>
</dbReference>
<dbReference type="RefSeq" id="WP_000439304.1">
    <property type="nucleotide sequence ID" value="NC_012581.1"/>
</dbReference>
<dbReference type="SMR" id="C3L8Q3"/>
<dbReference type="KEGG" id="bah:BAMEG_3036"/>
<dbReference type="HOGENOM" id="CLU_015961_3_0_9"/>
<dbReference type="GO" id="GO:0005524">
    <property type="term" value="F:ATP binding"/>
    <property type="evidence" value="ECO:0007669"/>
    <property type="project" value="UniProtKB-UniRule"/>
</dbReference>
<dbReference type="GO" id="GO:0004810">
    <property type="term" value="F:CCA tRNA nucleotidyltransferase activity"/>
    <property type="evidence" value="ECO:0007669"/>
    <property type="project" value="UniProtKB-UniRule"/>
</dbReference>
<dbReference type="GO" id="GO:0000287">
    <property type="term" value="F:magnesium ion binding"/>
    <property type="evidence" value="ECO:0007669"/>
    <property type="project" value="UniProtKB-UniRule"/>
</dbReference>
<dbReference type="GO" id="GO:0000049">
    <property type="term" value="F:tRNA binding"/>
    <property type="evidence" value="ECO:0007669"/>
    <property type="project" value="UniProtKB-UniRule"/>
</dbReference>
<dbReference type="GO" id="GO:0042245">
    <property type="term" value="P:RNA repair"/>
    <property type="evidence" value="ECO:0007669"/>
    <property type="project" value="UniProtKB-KW"/>
</dbReference>
<dbReference type="GO" id="GO:0001680">
    <property type="term" value="P:tRNA 3'-terminal CCA addition"/>
    <property type="evidence" value="ECO:0007669"/>
    <property type="project" value="UniProtKB-UniRule"/>
</dbReference>
<dbReference type="CDD" id="cd05398">
    <property type="entry name" value="NT_ClassII-CCAase"/>
    <property type="match status" value="1"/>
</dbReference>
<dbReference type="Gene3D" id="1.10.110.30">
    <property type="match status" value="1"/>
</dbReference>
<dbReference type="Gene3D" id="1.10.246.80">
    <property type="match status" value="1"/>
</dbReference>
<dbReference type="Gene3D" id="1.20.58.560">
    <property type="match status" value="1"/>
</dbReference>
<dbReference type="Gene3D" id="3.30.460.10">
    <property type="entry name" value="Beta Polymerase, domain 2"/>
    <property type="match status" value="1"/>
</dbReference>
<dbReference type="HAMAP" id="MF_01263">
    <property type="entry name" value="CCA_bact_type3"/>
    <property type="match status" value="1"/>
</dbReference>
<dbReference type="InterPro" id="IPR050264">
    <property type="entry name" value="Bact_CCA-adding_enz_type3_sf"/>
</dbReference>
<dbReference type="InterPro" id="IPR032810">
    <property type="entry name" value="CCA-adding_enz_C"/>
</dbReference>
<dbReference type="InterPro" id="IPR023068">
    <property type="entry name" value="CCA-adding_enz_firmicutes"/>
</dbReference>
<dbReference type="InterPro" id="IPR043519">
    <property type="entry name" value="NT_sf"/>
</dbReference>
<dbReference type="InterPro" id="IPR002646">
    <property type="entry name" value="PolA_pol_head_dom"/>
</dbReference>
<dbReference type="InterPro" id="IPR032828">
    <property type="entry name" value="PolyA_RNA-bd"/>
</dbReference>
<dbReference type="NCBIfam" id="NF009814">
    <property type="entry name" value="PRK13299.1"/>
    <property type="match status" value="1"/>
</dbReference>
<dbReference type="PANTHER" id="PTHR46173">
    <property type="entry name" value="CCA TRNA NUCLEOTIDYLTRANSFERASE 1, MITOCHONDRIAL"/>
    <property type="match status" value="1"/>
</dbReference>
<dbReference type="PANTHER" id="PTHR46173:SF1">
    <property type="entry name" value="CCA TRNA NUCLEOTIDYLTRANSFERASE 1, MITOCHONDRIAL"/>
    <property type="match status" value="1"/>
</dbReference>
<dbReference type="Pfam" id="PF01743">
    <property type="entry name" value="PolyA_pol"/>
    <property type="match status" value="1"/>
</dbReference>
<dbReference type="Pfam" id="PF12627">
    <property type="entry name" value="PolyA_pol_RNAbd"/>
    <property type="match status" value="1"/>
</dbReference>
<dbReference type="Pfam" id="PF13735">
    <property type="entry name" value="tRNA_NucTran2_2"/>
    <property type="match status" value="1"/>
</dbReference>
<dbReference type="SUPFAM" id="SSF81301">
    <property type="entry name" value="Nucleotidyltransferase"/>
    <property type="match status" value="1"/>
</dbReference>
<dbReference type="SUPFAM" id="SSF81891">
    <property type="entry name" value="Poly A polymerase C-terminal region-like"/>
    <property type="match status" value="1"/>
</dbReference>
<reference key="1">
    <citation type="submission" date="2008-10" db="EMBL/GenBank/DDBJ databases">
        <title>Genome sequence of Bacillus anthracis str. CDC 684.</title>
        <authorList>
            <person name="Dodson R.J."/>
            <person name="Munk A.C."/>
            <person name="Brettin T."/>
            <person name="Bruce D."/>
            <person name="Detter C."/>
            <person name="Tapia R."/>
            <person name="Han C."/>
            <person name="Sutton G."/>
            <person name="Sims D."/>
        </authorList>
    </citation>
    <scope>NUCLEOTIDE SEQUENCE [LARGE SCALE GENOMIC DNA]</scope>
    <source>
        <strain>CDC 684 / NRRL 3495</strain>
    </source>
</reference>
<name>CCA_BACAC</name>
<gene>
    <name evidence="1" type="primary">cca</name>
    <name type="ordered locus">BAMEG_3036</name>
</gene>
<organism>
    <name type="scientific">Bacillus anthracis (strain CDC 684 / NRRL 3495)</name>
    <dbReference type="NCBI Taxonomy" id="568206"/>
    <lineage>
        <taxon>Bacteria</taxon>
        <taxon>Bacillati</taxon>
        <taxon>Bacillota</taxon>
        <taxon>Bacilli</taxon>
        <taxon>Bacillales</taxon>
        <taxon>Bacillaceae</taxon>
        <taxon>Bacillus</taxon>
        <taxon>Bacillus cereus group</taxon>
    </lineage>
</organism>
<protein>
    <recommendedName>
        <fullName evidence="1">CCA-adding enzyme</fullName>
        <ecNumber evidence="1">2.7.7.72</ecNumber>
    </recommendedName>
    <alternativeName>
        <fullName evidence="1">CCA tRNA nucleotidyltransferase</fullName>
    </alternativeName>
    <alternativeName>
        <fullName evidence="1">tRNA CCA-pyrophosphorylase</fullName>
    </alternativeName>
    <alternativeName>
        <fullName evidence="1">tRNA adenylyl-/cytidylyl- transferase</fullName>
    </alternativeName>
    <alternativeName>
        <fullName evidence="1">tRNA nucleotidyltransferase</fullName>
    </alternativeName>
    <alternativeName>
        <fullName evidence="1">tRNA-NT</fullName>
    </alternativeName>
</protein>
<proteinExistence type="inferred from homology"/>